<organism>
    <name type="scientific">Arabidopsis thaliana</name>
    <name type="common">Mouse-ear cress</name>
    <dbReference type="NCBI Taxonomy" id="3702"/>
    <lineage>
        <taxon>Eukaryota</taxon>
        <taxon>Viridiplantae</taxon>
        <taxon>Streptophyta</taxon>
        <taxon>Embryophyta</taxon>
        <taxon>Tracheophyta</taxon>
        <taxon>Spermatophyta</taxon>
        <taxon>Magnoliopsida</taxon>
        <taxon>eudicotyledons</taxon>
        <taxon>Gunneridae</taxon>
        <taxon>Pentapetalae</taxon>
        <taxon>rosids</taxon>
        <taxon>malvids</taxon>
        <taxon>Brassicales</taxon>
        <taxon>Brassicaceae</taxon>
        <taxon>Camelineae</taxon>
        <taxon>Arabidopsis</taxon>
    </lineage>
</organism>
<feature type="chain" id="PRO_0000233175" description="MADS-box transcription factor PHERES 1">
    <location>
        <begin position="1"/>
        <end position="279"/>
    </location>
</feature>
<feature type="domain" description="MADS-box" evidence="1">
    <location>
        <begin position="1"/>
        <end position="60"/>
    </location>
</feature>
<feature type="sequence variant" description="In strain: cv. Bla-1, cv. Bs-1, cv. Ita-0 and cv. Kas-1." evidence="2">
    <original>L</original>
    <variation>I</variation>
    <location>
        <position position="76"/>
    </location>
</feature>
<feature type="sequence variant" description="In strain: cv. Lisse-2." evidence="2">
    <original>H</original>
    <variation>Q</variation>
    <location>
        <position position="128"/>
    </location>
</feature>
<feature type="sequence variant" description="In strain: cv. Gr-3." evidence="2">
    <original>I</original>
    <variation>T</variation>
    <location>
        <position position="169"/>
    </location>
</feature>
<feature type="sequence variant" description="In strain: cv. Co-1." evidence="2">
    <original>N</original>
    <variation>D</variation>
    <location>
        <position position="230"/>
    </location>
</feature>
<accession>O80805</accession>
<accession>Q84JV4</accession>
<accession>Q84JW5</accession>
<accession>Q84VN9</accession>
<accession>Q84VP0</accession>
<accession>Q84VP1</accession>
<reference key="1">
    <citation type="journal article" date="2000" name="Nature">
        <title>Sequence and analysis of chromosome 1 of the plant Arabidopsis thaliana.</title>
        <authorList>
            <person name="Theologis A."/>
            <person name="Ecker J.R."/>
            <person name="Palm C.J."/>
            <person name="Federspiel N.A."/>
            <person name="Kaul S."/>
            <person name="White O."/>
            <person name="Alonso J."/>
            <person name="Altafi H."/>
            <person name="Araujo R."/>
            <person name="Bowman C.L."/>
            <person name="Brooks S.Y."/>
            <person name="Buehler E."/>
            <person name="Chan A."/>
            <person name="Chao Q."/>
            <person name="Chen H."/>
            <person name="Cheuk R.F."/>
            <person name="Chin C.W."/>
            <person name="Chung M.K."/>
            <person name="Conn L."/>
            <person name="Conway A.B."/>
            <person name="Conway A.R."/>
            <person name="Creasy T.H."/>
            <person name="Dewar K."/>
            <person name="Dunn P."/>
            <person name="Etgu P."/>
            <person name="Feldblyum T.V."/>
            <person name="Feng J.-D."/>
            <person name="Fong B."/>
            <person name="Fujii C.Y."/>
            <person name="Gill J.E."/>
            <person name="Goldsmith A.D."/>
            <person name="Haas B."/>
            <person name="Hansen N.F."/>
            <person name="Hughes B."/>
            <person name="Huizar L."/>
            <person name="Hunter J.L."/>
            <person name="Jenkins J."/>
            <person name="Johnson-Hopson C."/>
            <person name="Khan S."/>
            <person name="Khaykin E."/>
            <person name="Kim C.J."/>
            <person name="Koo H.L."/>
            <person name="Kremenetskaia I."/>
            <person name="Kurtz D.B."/>
            <person name="Kwan A."/>
            <person name="Lam B."/>
            <person name="Langin-Hooper S."/>
            <person name="Lee A."/>
            <person name="Lee J.M."/>
            <person name="Lenz C.A."/>
            <person name="Li J.H."/>
            <person name="Li Y.-P."/>
            <person name="Lin X."/>
            <person name="Liu S.X."/>
            <person name="Liu Z.A."/>
            <person name="Luros J.S."/>
            <person name="Maiti R."/>
            <person name="Marziali A."/>
            <person name="Militscher J."/>
            <person name="Miranda M."/>
            <person name="Nguyen M."/>
            <person name="Nierman W.C."/>
            <person name="Osborne B.I."/>
            <person name="Pai G."/>
            <person name="Peterson J."/>
            <person name="Pham P.K."/>
            <person name="Rizzo M."/>
            <person name="Rooney T."/>
            <person name="Rowley D."/>
            <person name="Sakano H."/>
            <person name="Salzberg S.L."/>
            <person name="Schwartz J.R."/>
            <person name="Shinn P."/>
            <person name="Southwick A.M."/>
            <person name="Sun H."/>
            <person name="Tallon L.J."/>
            <person name="Tambunga G."/>
            <person name="Toriumi M.J."/>
            <person name="Town C.D."/>
            <person name="Utterback T."/>
            <person name="Van Aken S."/>
            <person name="Vaysberg M."/>
            <person name="Vysotskaia V.S."/>
            <person name="Walker M."/>
            <person name="Wu D."/>
            <person name="Yu G."/>
            <person name="Fraser C.M."/>
            <person name="Venter J.C."/>
            <person name="Davis R.W."/>
        </authorList>
    </citation>
    <scope>NUCLEOTIDE SEQUENCE [LARGE SCALE GENOMIC DNA]</scope>
    <source>
        <strain>cv. Columbia</strain>
    </source>
</reference>
<reference key="2">
    <citation type="journal article" date="2017" name="Plant J.">
        <title>Araport11: a complete reannotation of the Arabidopsis thaliana reference genome.</title>
        <authorList>
            <person name="Cheng C.Y."/>
            <person name="Krishnakumar V."/>
            <person name="Chan A.P."/>
            <person name="Thibaud-Nissen F."/>
            <person name="Schobel S."/>
            <person name="Town C.D."/>
        </authorList>
    </citation>
    <scope>GENOME REANNOTATION</scope>
    <source>
        <strain>cv. Columbia</strain>
    </source>
</reference>
<reference key="3">
    <citation type="journal article" date="2003" name="Genetics">
        <title>Molecular population genetics of the Arabidopsis CLAVATA2 region: the genomic scale of variation and selection in a selfing species.</title>
        <authorList>
            <person name="Shepard K.A."/>
            <person name="Purugganan M.D."/>
        </authorList>
    </citation>
    <scope>NUCLEOTIDE SEQUENCE [GENOMIC DNA] OF 14-230</scope>
    <scope>VARIANTS ILE-76; GLN-128; THR-169 AND ASP-230</scope>
    <source>
        <strain>cv. Bla-1</strain>
        <strain>cv. Bs-1</strain>
        <strain>cv. Chi-1</strain>
        <strain>cv. Co-1</strain>
        <strain>cv. Cvi-0</strain>
        <strain>cv. Gr-3</strain>
        <strain>cv. Ita-0</strain>
        <strain>cv. Kas-1</strain>
        <strain>cv. Lisse-2</strain>
    </source>
</reference>
<reference key="4">
    <citation type="journal article" date="2003" name="Genes Dev.">
        <title>The Polycomb-group protein MEDEA regulates seed development by controlling expression of the MADS-box gene PHERES1.</title>
        <authorList>
            <person name="Koehler C."/>
            <person name="Hennig L."/>
            <person name="Spillane C."/>
            <person name="Pien S."/>
            <person name="Gruissem W."/>
            <person name="Grossniklaus U."/>
        </authorList>
    </citation>
    <scope>FUNCTION</scope>
    <scope>INDUCTION</scope>
    <scope>TISSUE SPECIFICITY</scope>
</reference>
<reference key="5">
    <citation type="journal article" date="2005" name="Nat. Genet.">
        <title>The Arabidopsis thaliana MEDEA Polycomb group protein controls expression of PHERES1 by parental imprinting.</title>
        <authorList>
            <person name="Koehler C."/>
            <person name="Page D.R."/>
            <person name="Gagliardini V."/>
            <person name="Grossniklaus U."/>
        </authorList>
    </citation>
    <scope>IMPRINTING</scope>
    <scope>TISSUE SPECIFICITY</scope>
    <scope>DEVELOPMENTAL STAGE</scope>
</reference>
<reference key="6">
    <citation type="journal article" date="2005" name="Plant J.">
        <title>PICKLE acts during germination to repress expression of embryonic traits.</title>
        <authorList>
            <person name="Li H.-C."/>
            <person name="Chuang K."/>
            <person name="Henderson J.T."/>
            <person name="Rider S.D. Jr."/>
            <person name="Bai Y."/>
            <person name="Zhang H."/>
            <person name="Fountain M."/>
            <person name="Gerber J."/>
            <person name="Ogas J."/>
        </authorList>
    </citation>
    <scope>INDUCTION</scope>
</reference>
<reference key="7">
    <citation type="journal article" date="2005" name="Plant Cell">
        <title>Comprehensive interaction map of the Arabidopsis MADS Box transcription factors.</title>
        <authorList>
            <person name="de Folter S."/>
            <person name="Immink R.G.H."/>
            <person name="Kieffer M."/>
            <person name="Parenicova L."/>
            <person name="Henz S.R."/>
            <person name="Weigel D."/>
            <person name="Busscher M."/>
            <person name="Kooiker M."/>
            <person name="Colombo L."/>
            <person name="Kater M.M."/>
            <person name="Davies B."/>
            <person name="Angenent G.C."/>
        </authorList>
    </citation>
    <scope>INTERACTION WITH AGL62</scope>
</reference>
<reference key="8">
    <citation type="journal article" date="2008" name="Plant Cell">
        <title>The MADS domain protein DIANA acts together with AGAMOUS-LIKE80 to specify the central cell in Arabidopsis ovules.</title>
        <authorList>
            <person name="Bemer M."/>
            <person name="Wolters-Arts M."/>
            <person name="Grossniklaus U."/>
            <person name="Angenent G.C."/>
        </authorList>
    </citation>
    <scope>INTERACTION WITH AGL61</scope>
</reference>
<sequence>MRGKMKLSFIENDSVRKTTFTKRKKGMLKKFNELVTLCGVDACAVIRSPYNSIQEPWPSREGVEEVMSKFMEFSVLDRTKKMVDQETFLRQRIAKETERLQKLRDENRNSQIRDLMFGCLKGEVDVSHLHGRDLLDLNVFLNKYLNGVIRRVEILKENGESSSSVPPPIGVAPTVVDASVPIGFDGRMIQDQNQNQQEPVQFQYQALYDFYDQIPKKLHDFNMKMNIDPNQSMNLDLNDGEDEGIPCMDNNNYHPEIDCLATVTTAPTDVCAPNIINDL</sequence>
<protein>
    <recommendedName>
        <fullName>MADS-box transcription factor PHERES 1</fullName>
    </recommendedName>
    <alternativeName>
        <fullName>Agamous-like MADS-box protein AGL37</fullName>
    </alternativeName>
</protein>
<gene>
    <name type="primary">PHE1</name>
    <name type="synonym">AGL37</name>
    <name type="ordered locus">At1g65330</name>
    <name type="ORF">T8F5.11</name>
</gene>
<proteinExistence type="evidence at protein level"/>
<keyword id="KW-0238">DNA-binding</keyword>
<keyword id="KW-0539">Nucleus</keyword>
<keyword id="KW-1185">Reference proteome</keyword>
<keyword id="KW-0804">Transcription</keyword>
<keyword id="KW-0805">Transcription regulation</keyword>
<comment type="function">
    <text evidence="3">Probable transcription factor involved in the development of gametophytes and seeds.</text>
</comment>
<comment type="subunit">
    <text evidence="5 7">Interacts with AGL61/DIANA and AGL62.</text>
</comment>
<comment type="subcellular location">
    <subcellularLocation>
        <location evidence="1">Nucleus</location>
    </subcellularLocation>
</comment>
<comment type="tissue specificity">
    <text evidence="3 4">Male gametophyte, embryo and endosperm.</text>
</comment>
<comment type="developmental stage">
    <text evidence="4">Not present in female gametophyte before fertilization. Expressed in pollen tube and at the micropylar pole of pollinated seeds.</text>
</comment>
<comment type="induction">
    <text evidence="3 6">Repressed by MEA, FIS2 and FIE in seeds, and by PKL after germination.</text>
</comment>
<comment type="miscellaneous">
    <text>The PHE1 locus is imprinted in gametophytes. Maternal inherited gene is repressed in female gametophyte, while the paternal inherited gene is expressed in the male gametophyte (pollen tube) and in fertilized seeds. The maternal repression is dependent on MEA, FIS2 and FIE proteins, which may modulate the methylation of the maternal locus, and repress its transcription.</text>
</comment>
<comment type="miscellaneous">
    <text>This protein was called 'Pheres' in memory of one of the murdered sons of the mythological 'Medea', as PHERES1 is repressed by MEDEA.</text>
</comment>
<dbReference type="EMBL" id="AC004512">
    <property type="protein sequence ID" value="AAC27144.1"/>
    <property type="molecule type" value="Genomic_DNA"/>
</dbReference>
<dbReference type="EMBL" id="CP002684">
    <property type="protein sequence ID" value="AEE34359.1"/>
    <property type="molecule type" value="Genomic_DNA"/>
</dbReference>
<dbReference type="EMBL" id="AF528574">
    <property type="protein sequence ID" value="AAO43311.1"/>
    <property type="molecule type" value="Genomic_DNA"/>
</dbReference>
<dbReference type="EMBL" id="AF528575">
    <property type="protein sequence ID" value="AAO43312.1"/>
    <property type="molecule type" value="Genomic_DNA"/>
</dbReference>
<dbReference type="EMBL" id="AF528576">
    <property type="protein sequence ID" value="AAO43313.1"/>
    <property type="molecule type" value="Genomic_DNA"/>
</dbReference>
<dbReference type="EMBL" id="AF528577">
    <property type="protein sequence ID" value="AAO43314.1"/>
    <property type="molecule type" value="Genomic_DNA"/>
</dbReference>
<dbReference type="EMBL" id="AF528578">
    <property type="protein sequence ID" value="AAO43315.1"/>
    <property type="molecule type" value="Genomic_DNA"/>
</dbReference>
<dbReference type="EMBL" id="AF528579">
    <property type="protein sequence ID" value="AAO43316.1"/>
    <property type="molecule type" value="Genomic_DNA"/>
</dbReference>
<dbReference type="EMBL" id="AF528580">
    <property type="protein sequence ID" value="AAO43317.1"/>
    <property type="molecule type" value="Genomic_DNA"/>
</dbReference>
<dbReference type="EMBL" id="AF528581">
    <property type="protein sequence ID" value="AAO43318.1"/>
    <property type="molecule type" value="Genomic_DNA"/>
</dbReference>
<dbReference type="EMBL" id="AF528582">
    <property type="protein sequence ID" value="AAO43319.1"/>
    <property type="molecule type" value="Genomic_DNA"/>
</dbReference>
<dbReference type="PIR" id="T02356">
    <property type="entry name" value="T02356"/>
</dbReference>
<dbReference type="RefSeq" id="NP_176712.1">
    <property type="nucleotide sequence ID" value="NM_105207.2"/>
</dbReference>
<dbReference type="SMR" id="O80805"/>
<dbReference type="BioGRID" id="28062">
    <property type="interactions" value="7"/>
</dbReference>
<dbReference type="FunCoup" id="O80805">
    <property type="interactions" value="23"/>
</dbReference>
<dbReference type="IntAct" id="O80805">
    <property type="interactions" value="8"/>
</dbReference>
<dbReference type="STRING" id="3702.O80805"/>
<dbReference type="GlyGen" id="O80805">
    <property type="glycosylation" value="1 site"/>
</dbReference>
<dbReference type="PaxDb" id="3702-AT1G65330.1"/>
<dbReference type="ProteomicsDB" id="234997"/>
<dbReference type="EnsemblPlants" id="AT1G65330.1">
    <property type="protein sequence ID" value="AT1G65330.1"/>
    <property type="gene ID" value="AT1G65330"/>
</dbReference>
<dbReference type="GeneID" id="842841"/>
<dbReference type="Gramene" id="AT1G65330.1">
    <property type="protein sequence ID" value="AT1G65330.1"/>
    <property type="gene ID" value="AT1G65330"/>
</dbReference>
<dbReference type="KEGG" id="ath:AT1G65330"/>
<dbReference type="Araport" id="AT1G65330"/>
<dbReference type="TAIR" id="AT1G65330">
    <property type="gene designation" value="PHE1"/>
</dbReference>
<dbReference type="eggNOG" id="KOG0014">
    <property type="taxonomic scope" value="Eukaryota"/>
</dbReference>
<dbReference type="HOGENOM" id="CLU_053053_7_1_1"/>
<dbReference type="InParanoid" id="O80805"/>
<dbReference type="PhylomeDB" id="O80805"/>
<dbReference type="PRO" id="PR:O80805"/>
<dbReference type="Proteomes" id="UP000006548">
    <property type="component" value="Chromosome 1"/>
</dbReference>
<dbReference type="ExpressionAtlas" id="O80805">
    <property type="expression patterns" value="baseline and differential"/>
</dbReference>
<dbReference type="GO" id="GO:0005634">
    <property type="term" value="C:nucleus"/>
    <property type="evidence" value="ECO:0000250"/>
    <property type="project" value="TAIR"/>
</dbReference>
<dbReference type="GO" id="GO:0090406">
    <property type="term" value="C:pollen tube"/>
    <property type="evidence" value="ECO:0000314"/>
    <property type="project" value="TAIR"/>
</dbReference>
<dbReference type="GO" id="GO:0000987">
    <property type="term" value="F:cis-regulatory region sequence-specific DNA binding"/>
    <property type="evidence" value="ECO:0007669"/>
    <property type="project" value="InterPro"/>
</dbReference>
<dbReference type="GO" id="GO:0003700">
    <property type="term" value="F:DNA-binding transcription factor activity"/>
    <property type="evidence" value="ECO:0000250"/>
    <property type="project" value="TAIR"/>
</dbReference>
<dbReference type="GO" id="GO:0000981">
    <property type="term" value="F:DNA-binding transcription factor activity, RNA polymerase II-specific"/>
    <property type="evidence" value="ECO:0007669"/>
    <property type="project" value="InterPro"/>
</dbReference>
<dbReference type="GO" id="GO:0046983">
    <property type="term" value="F:protein dimerization activity"/>
    <property type="evidence" value="ECO:0007669"/>
    <property type="project" value="InterPro"/>
</dbReference>
<dbReference type="GO" id="GO:0009793">
    <property type="term" value="P:embryo development ending in seed dormancy"/>
    <property type="evidence" value="ECO:0000315"/>
    <property type="project" value="TAIR"/>
</dbReference>
<dbReference type="GO" id="GO:0045944">
    <property type="term" value="P:positive regulation of transcription by RNA polymerase II"/>
    <property type="evidence" value="ECO:0007669"/>
    <property type="project" value="InterPro"/>
</dbReference>
<dbReference type="CDD" id="cd00266">
    <property type="entry name" value="MADS_SRF_like"/>
    <property type="match status" value="1"/>
</dbReference>
<dbReference type="FunFam" id="3.40.1810.10:FF:000024">
    <property type="entry name" value="Agamous-like MADS-box protein AGL80"/>
    <property type="match status" value="1"/>
</dbReference>
<dbReference type="Gene3D" id="3.40.1810.10">
    <property type="entry name" value="Transcription factor, MADS-box"/>
    <property type="match status" value="1"/>
</dbReference>
<dbReference type="InterPro" id="IPR050142">
    <property type="entry name" value="MADS-box/MEF2_TF"/>
</dbReference>
<dbReference type="InterPro" id="IPR033897">
    <property type="entry name" value="SRF-like_MADS-box"/>
</dbReference>
<dbReference type="InterPro" id="IPR002100">
    <property type="entry name" value="TF_MADSbox"/>
</dbReference>
<dbReference type="InterPro" id="IPR036879">
    <property type="entry name" value="TF_MADSbox_sf"/>
</dbReference>
<dbReference type="PANTHER" id="PTHR48019">
    <property type="entry name" value="SERUM RESPONSE FACTOR HOMOLOG"/>
    <property type="match status" value="1"/>
</dbReference>
<dbReference type="Pfam" id="PF00319">
    <property type="entry name" value="SRF-TF"/>
    <property type="match status" value="1"/>
</dbReference>
<dbReference type="PRINTS" id="PR00404">
    <property type="entry name" value="MADSDOMAIN"/>
</dbReference>
<dbReference type="SMART" id="SM00432">
    <property type="entry name" value="MADS"/>
    <property type="match status" value="1"/>
</dbReference>
<dbReference type="SUPFAM" id="SSF55455">
    <property type="entry name" value="SRF-like"/>
    <property type="match status" value="1"/>
</dbReference>
<dbReference type="PROSITE" id="PS50066">
    <property type="entry name" value="MADS_BOX_2"/>
    <property type="match status" value="1"/>
</dbReference>
<name>PHE1_ARATH</name>
<evidence type="ECO:0000255" key="1">
    <source>
        <dbReference type="PROSITE-ProRule" id="PRU00251"/>
    </source>
</evidence>
<evidence type="ECO:0000269" key="2">
    <source>
    </source>
</evidence>
<evidence type="ECO:0000269" key="3">
    <source>
    </source>
</evidence>
<evidence type="ECO:0000269" key="4">
    <source>
    </source>
</evidence>
<evidence type="ECO:0000269" key="5">
    <source>
    </source>
</evidence>
<evidence type="ECO:0000269" key="6">
    <source>
    </source>
</evidence>
<evidence type="ECO:0000269" key="7">
    <source>
    </source>
</evidence>